<accession>Q9FYK0</accession>
<accession>Q9FXJ6</accession>
<evidence type="ECO:0000250" key="1">
    <source>
        <dbReference type="UniProtKB" id="P43298"/>
    </source>
</evidence>
<evidence type="ECO:0000255" key="2"/>
<evidence type="ECO:0000255" key="3">
    <source>
        <dbReference type="PROSITE-ProRule" id="PRU00159"/>
    </source>
</evidence>
<evidence type="ECO:0000255" key="4">
    <source>
        <dbReference type="PROSITE-ProRule" id="PRU00498"/>
    </source>
</evidence>
<evidence type="ECO:0000269" key="5">
    <source>
    </source>
</evidence>
<evidence type="ECO:0000269" key="6">
    <source>
    </source>
</evidence>
<evidence type="ECO:0000303" key="7">
    <source>
    </source>
</evidence>
<evidence type="ECO:0000303" key="8">
    <source>
    </source>
</evidence>
<evidence type="ECO:0000305" key="9"/>
<evidence type="ECO:0000312" key="10">
    <source>
        <dbReference type="Araport" id="AT1G24650"/>
    </source>
</evidence>
<evidence type="ECO:0000312" key="11">
    <source>
        <dbReference type="EMBL" id="AAF97970.1"/>
    </source>
</evidence>
<evidence type="ECO:0000312" key="12">
    <source>
        <dbReference type="EMBL" id="AAG03120.1"/>
    </source>
</evidence>
<evidence type="ECO:0000312" key="13">
    <source>
        <dbReference type="Proteomes" id="UP000006548"/>
    </source>
</evidence>
<sequence length="886" mass="97406">MIAKNFLLLLCFIALVNVESSPDEAVMIALRDSLKLSGNPNWSGSDPCKWSMFIKCDASNRVTAIQIGDRGISGKLPPDLGKLTSLTKFEVMRNRLTGPIPSLAGLKSLVTVYANDNDFTSVPEDFFSGLSSLQHVSLDNNPFDSWVIPPSLENATSLVDFSAVNCNLSGKIPDYLFEGKDFSSLTTLKLSYNSLVCEFPMNFSDSRVQVLMLNGQKGREKLHGSISFLQKMTSLTNVTLQGNSFSGPLPDFSGLVSLKSFNVRENQLSGLVPSSLFELQSLSDVALGNNLLQGPTPNFTAPDIKPDLNGLNSFCLDTPGTSCDPRVNTLLSIVEAFGYPVNFAEKWKGNDPCSGWVGITCTGTDITVINFKNLGLNGTISPRFADFASLRVINLSQNNLNGTIPQELAKLSNLKTLDVSKNRLCGEVPRFNTTIVNTTGNFEDCPNGNAGKKASSNAGKIVGSVIGILLALLLIGVAIFFLVKKKMQYHKMHPQQQSSDQDAFKITIENLCTGVSESGFSGNDAHLGEAGNIVISIQVLRDATYNFDEKNILGRGGFGIVYKGELHDGTKIAVKRMESSIISGKGLDEFKSEIAVLTRVRHRNLVVLHGYCLEGNERLLVYQYMPQGTLSRHIFYWKEEGLRPLEWTRRLIIALDVARGVEYLHTLAHQSFIHRDLKPSNILLGDDMHAKVADFGLVRLAPEGTQSIETKIAGTFGYLAPEYAVTGRVTTKVDVYSFGVILMELLTGRKALDVARSEEEVHLATWFRRMFINKGSFPKAIDEAMEVNEETLRSINIVAELANQCSSREPRDRPDMNHVVNVLVSLVVQWKPTERSSDSEDIYGIDYDTPLPQLILDSCFFGDNTLTSIPSRPSELESTFKSGQGR</sequence>
<protein>
    <recommendedName>
        <fullName evidence="7">Receptor-like kinase TMK2</fullName>
        <ecNumber evidence="9">2.7.11.1</ecNumber>
    </recommendedName>
    <alternativeName>
        <fullName evidence="8">BARK1-like kinase 3</fullName>
    </alternativeName>
    <alternativeName>
        <fullName evidence="7">Leucine-rich repeat receptor-like kinases TMK2</fullName>
    </alternativeName>
    <alternativeName>
        <fullName evidence="7">Transmembrane kinase 2</fullName>
    </alternativeName>
</protein>
<reference key="1">
    <citation type="journal article" date="2010" name="BMC Genomics">
        <title>Genome-wide cloning and sequence analysis of leucine-rich repeat receptor-like protein kinase genes in Arabidopsis thaliana.</title>
        <authorList>
            <person name="Gou X."/>
            <person name="He K."/>
            <person name="Yang H."/>
            <person name="Yuan T."/>
            <person name="Lin H."/>
            <person name="Clouse S.D."/>
            <person name="Li J."/>
        </authorList>
    </citation>
    <scope>NUCLEOTIDE SEQUENCE [MRNA]</scope>
</reference>
<reference key="2">
    <citation type="journal article" date="2000" name="Nature">
        <title>Sequence and analysis of chromosome 1 of the plant Arabidopsis thaliana.</title>
        <authorList>
            <person name="Theologis A."/>
            <person name="Ecker J.R."/>
            <person name="Palm C.J."/>
            <person name="Federspiel N.A."/>
            <person name="Kaul S."/>
            <person name="White O."/>
            <person name="Alonso J."/>
            <person name="Altafi H."/>
            <person name="Araujo R."/>
            <person name="Bowman C.L."/>
            <person name="Brooks S.Y."/>
            <person name="Buehler E."/>
            <person name="Chan A."/>
            <person name="Chao Q."/>
            <person name="Chen H."/>
            <person name="Cheuk R.F."/>
            <person name="Chin C.W."/>
            <person name="Chung M.K."/>
            <person name="Conn L."/>
            <person name="Conway A.B."/>
            <person name="Conway A.R."/>
            <person name="Creasy T.H."/>
            <person name="Dewar K."/>
            <person name="Dunn P."/>
            <person name="Etgu P."/>
            <person name="Feldblyum T.V."/>
            <person name="Feng J.-D."/>
            <person name="Fong B."/>
            <person name="Fujii C.Y."/>
            <person name="Gill J.E."/>
            <person name="Goldsmith A.D."/>
            <person name="Haas B."/>
            <person name="Hansen N.F."/>
            <person name="Hughes B."/>
            <person name="Huizar L."/>
            <person name="Hunter J.L."/>
            <person name="Jenkins J."/>
            <person name="Johnson-Hopson C."/>
            <person name="Khan S."/>
            <person name="Khaykin E."/>
            <person name="Kim C.J."/>
            <person name="Koo H.L."/>
            <person name="Kremenetskaia I."/>
            <person name="Kurtz D.B."/>
            <person name="Kwan A."/>
            <person name="Lam B."/>
            <person name="Langin-Hooper S."/>
            <person name="Lee A."/>
            <person name="Lee J.M."/>
            <person name="Lenz C.A."/>
            <person name="Li J.H."/>
            <person name="Li Y.-P."/>
            <person name="Lin X."/>
            <person name="Liu S.X."/>
            <person name="Liu Z.A."/>
            <person name="Luros J.S."/>
            <person name="Maiti R."/>
            <person name="Marziali A."/>
            <person name="Militscher J."/>
            <person name="Miranda M."/>
            <person name="Nguyen M."/>
            <person name="Nierman W.C."/>
            <person name="Osborne B.I."/>
            <person name="Pai G."/>
            <person name="Peterson J."/>
            <person name="Pham P.K."/>
            <person name="Rizzo M."/>
            <person name="Rooney T."/>
            <person name="Rowley D."/>
            <person name="Sakano H."/>
            <person name="Salzberg S.L."/>
            <person name="Schwartz J.R."/>
            <person name="Shinn P."/>
            <person name="Southwick A.M."/>
            <person name="Sun H."/>
            <person name="Tallon L.J."/>
            <person name="Tambunga G."/>
            <person name="Toriumi M.J."/>
            <person name="Town C.D."/>
            <person name="Utterback T."/>
            <person name="Van Aken S."/>
            <person name="Vaysberg M."/>
            <person name="Vysotskaia V.S."/>
            <person name="Walker M."/>
            <person name="Wu D."/>
            <person name="Yu G."/>
            <person name="Fraser C.M."/>
            <person name="Venter J.C."/>
            <person name="Davis R.W."/>
        </authorList>
    </citation>
    <scope>NUCLEOTIDE SEQUENCE [LARGE SCALE GENOMIC DNA]</scope>
    <source>
        <strain>cv. Columbia</strain>
    </source>
</reference>
<reference key="3">
    <citation type="journal article" date="2017" name="Plant J.">
        <title>Araport11: a complete reannotation of the Arabidopsis thaliana reference genome.</title>
        <authorList>
            <person name="Cheng C.Y."/>
            <person name="Krishnakumar V."/>
            <person name="Chan A.P."/>
            <person name="Thibaud-Nissen F."/>
            <person name="Schobel S."/>
            <person name="Town C.D."/>
        </authorList>
    </citation>
    <scope>GENOME REANNOTATION</scope>
    <source>
        <strain>cv. Columbia</strain>
    </source>
</reference>
<reference key="4">
    <citation type="journal article" date="2003" name="Curr. Opin. Plant Biol.">
        <title>Using mutant alleles to determine the structure and function of leucine-rich repeat receptor-like kinases.</title>
        <authorList>
            <person name="Dievart A."/>
            <person name="Clark S.E."/>
        </authorList>
    </citation>
    <scope>GENE FAMILY</scope>
</reference>
<reference key="5">
    <citation type="journal article" date="2013" name="PLoS ONE">
        <title>The TMK subfamily of receptor-like kinases in Arabidopsis display an essential role in growth and a reduced sensitivity to auxin.</title>
        <authorList>
            <person name="Dai N."/>
            <person name="Wang W."/>
            <person name="Patterson S.E."/>
            <person name="Bleecker A.B."/>
        </authorList>
    </citation>
    <scope>TISSUE SPECIFICITY</scope>
    <scope>DISRUPTION PHENOTYPE</scope>
    <scope>GENE FAMILY</scope>
    <scope>NOMENCLATURE</scope>
</reference>
<reference key="6">
    <citation type="journal article" date="2013" name="Plant Cell Physiol.">
        <title>Identification of Arabidopsis BAK1-associating receptor-like kinase 1 (BARK1) and characterization of its gene expression and brassinosteroid-regulated root phenotypes.</title>
        <authorList>
            <person name="Kim M.H."/>
            <person name="Kim Y."/>
            <person name="Kim J.W."/>
            <person name="Lee H.S."/>
            <person name="Lee W.S."/>
            <person name="Kim S.K."/>
            <person name="Wang Z.Y."/>
            <person name="Kim S.H."/>
        </authorList>
    </citation>
    <scope>GENE FAMILY</scope>
    <scope>NOMENCLATURE</scope>
</reference>
<reference key="7">
    <citation type="journal article" date="2014" name="Science">
        <title>Cell surface ABP1-TMK auxin-sensing complex activates ROP GTPase signaling.</title>
        <authorList>
            <person name="Xu T."/>
            <person name="Dai N."/>
            <person name="Chen J."/>
            <person name="Nagawa S."/>
            <person name="Cao M."/>
            <person name="Li H."/>
            <person name="Zhou Z."/>
            <person name="Chen X."/>
            <person name="De Rycke R."/>
            <person name="Rakusova H."/>
            <person name="Wang W."/>
            <person name="Jones A.M."/>
            <person name="Friml J."/>
            <person name="Patterson S.E."/>
            <person name="Bleecker A.B."/>
            <person name="Yang Z."/>
        </authorList>
    </citation>
    <scope>DISRUPTION PHENOTYPE</scope>
</reference>
<organism evidence="13">
    <name type="scientific">Arabidopsis thaliana</name>
    <name type="common">Mouse-ear cress</name>
    <dbReference type="NCBI Taxonomy" id="3702"/>
    <lineage>
        <taxon>Eukaryota</taxon>
        <taxon>Viridiplantae</taxon>
        <taxon>Streptophyta</taxon>
        <taxon>Embryophyta</taxon>
        <taxon>Tracheophyta</taxon>
        <taxon>Spermatophyta</taxon>
        <taxon>Magnoliopsida</taxon>
        <taxon>eudicotyledons</taxon>
        <taxon>Gunneridae</taxon>
        <taxon>Pentapetalae</taxon>
        <taxon>rosids</taxon>
        <taxon>malvids</taxon>
        <taxon>Brassicales</taxon>
        <taxon>Brassicaceae</taxon>
        <taxon>Camelineae</taxon>
        <taxon>Arabidopsis</taxon>
    </lineage>
</organism>
<feature type="signal peptide" evidence="2">
    <location>
        <begin position="1"/>
        <end position="20"/>
    </location>
</feature>
<feature type="chain" id="PRO_0000433430" description="Receptor-like kinase TMK2">
    <location>
        <begin position="21"/>
        <end position="886"/>
    </location>
</feature>
<feature type="topological domain" description="Extracellular" evidence="9">
    <location>
        <begin position="21"/>
        <end position="460"/>
    </location>
</feature>
<feature type="transmembrane region" description="Helical" evidence="2">
    <location>
        <begin position="461"/>
        <end position="481"/>
    </location>
</feature>
<feature type="topological domain" description="Cytoplasmic" evidence="9">
    <location>
        <begin position="482"/>
        <end position="886"/>
    </location>
</feature>
<feature type="repeat" description="LRR 1" evidence="9">
    <location>
        <begin position="59"/>
        <end position="83"/>
    </location>
</feature>
<feature type="repeat" description="LRR 2" evidence="9">
    <location>
        <begin position="84"/>
        <end position="106"/>
    </location>
</feature>
<feature type="repeat" description="LRR 3" evidence="9">
    <location>
        <begin position="107"/>
        <end position="129"/>
    </location>
</feature>
<feature type="repeat" description="LRR 4" evidence="9">
    <location>
        <begin position="131"/>
        <end position="155"/>
    </location>
</feature>
<feature type="repeat" description="LRR 5" evidence="9">
    <location>
        <begin position="157"/>
        <end position="179"/>
    </location>
</feature>
<feature type="repeat" description="LRR 6" evidence="9">
    <location>
        <begin position="182"/>
        <end position="206"/>
    </location>
</feature>
<feature type="repeat" description="LRR 7" evidence="9">
    <location>
        <begin position="208"/>
        <end position="232"/>
    </location>
</feature>
<feature type="repeat" description="LRR 8" evidence="9">
    <location>
        <begin position="233"/>
        <end position="254"/>
    </location>
</feature>
<feature type="repeat" description="LRR 9" evidence="9">
    <location>
        <begin position="255"/>
        <end position="279"/>
    </location>
</feature>
<feature type="repeat" description="LRR 10" evidence="9">
    <location>
        <begin position="281"/>
        <end position="302"/>
    </location>
</feature>
<feature type="repeat" description="LRR 11" evidence="9">
    <location>
        <begin position="363"/>
        <end position="386"/>
    </location>
</feature>
<feature type="repeat" description="LRR 12" evidence="9">
    <location>
        <begin position="387"/>
        <end position="410"/>
    </location>
</feature>
<feature type="repeat" description="LRR 13" evidence="9">
    <location>
        <begin position="411"/>
        <end position="438"/>
    </location>
</feature>
<feature type="domain" description="Protein kinase" evidence="3">
    <location>
        <begin position="547"/>
        <end position="827"/>
    </location>
</feature>
<feature type="active site" description="Proton acceptor" evidence="3">
    <location>
        <position position="676"/>
    </location>
</feature>
<feature type="binding site" evidence="3">
    <location>
        <begin position="553"/>
        <end position="561"/>
    </location>
    <ligand>
        <name>ATP</name>
        <dbReference type="ChEBI" id="CHEBI:30616"/>
    </ligand>
</feature>
<feature type="binding site" evidence="3">
    <location>
        <position position="575"/>
    </location>
    <ligand>
        <name>ATP</name>
        <dbReference type="ChEBI" id="CHEBI:30616"/>
    </ligand>
</feature>
<feature type="glycosylation site" description="N-linked (GlcNAc...) asparagine" evidence="4">
    <location>
        <position position="41"/>
    </location>
</feature>
<feature type="glycosylation site" description="N-linked (GlcNAc...) asparagine" evidence="4">
    <location>
        <position position="154"/>
    </location>
</feature>
<feature type="glycosylation site" description="N-linked (GlcNAc...) asparagine" evidence="4">
    <location>
        <position position="167"/>
    </location>
</feature>
<feature type="glycosylation site" description="N-linked (GlcNAc...) asparagine" evidence="4">
    <location>
        <position position="202"/>
    </location>
</feature>
<feature type="glycosylation site" description="N-linked (GlcNAc...) asparagine" evidence="4">
    <location>
        <position position="237"/>
    </location>
</feature>
<feature type="glycosylation site" description="N-linked (GlcNAc...) asparagine" evidence="4">
    <location>
        <position position="298"/>
    </location>
</feature>
<feature type="glycosylation site" description="N-linked (GlcNAc...) asparagine" evidence="4">
    <location>
        <position position="377"/>
    </location>
</feature>
<feature type="glycosylation site" description="N-linked (GlcNAc...) asparagine" evidence="4">
    <location>
        <position position="394"/>
    </location>
</feature>
<feature type="glycosylation site" description="N-linked (GlcNAc...) asparagine" evidence="4">
    <location>
        <position position="401"/>
    </location>
</feature>
<feature type="glycosylation site" description="N-linked (GlcNAc...) asparagine" evidence="4">
    <location>
        <position position="432"/>
    </location>
</feature>
<feature type="glycosylation site" description="N-linked (GlcNAc...) asparagine" evidence="4">
    <location>
        <position position="437"/>
    </location>
</feature>
<feature type="disulfide bond" evidence="1">
    <location>
        <begin position="48"/>
        <end position="56"/>
    </location>
</feature>
<feature type="disulfide bond" evidence="1">
    <location>
        <begin position="315"/>
        <end position="323"/>
    </location>
</feature>
<feature type="disulfide bond" evidence="1">
    <location>
        <begin position="353"/>
        <end position="361"/>
    </location>
</feature>
<name>TMK2_ARATH</name>
<comment type="function">
    <text evidence="5">Involved in auxin signal transduction and cell expansion and proliferation regulation (PubMed:23613767).</text>
</comment>
<comment type="catalytic activity">
    <reaction evidence="9">
        <text>L-seryl-[protein] + ATP = O-phospho-L-seryl-[protein] + ADP + H(+)</text>
        <dbReference type="Rhea" id="RHEA:17989"/>
        <dbReference type="Rhea" id="RHEA-COMP:9863"/>
        <dbReference type="Rhea" id="RHEA-COMP:11604"/>
        <dbReference type="ChEBI" id="CHEBI:15378"/>
        <dbReference type="ChEBI" id="CHEBI:29999"/>
        <dbReference type="ChEBI" id="CHEBI:30616"/>
        <dbReference type="ChEBI" id="CHEBI:83421"/>
        <dbReference type="ChEBI" id="CHEBI:456216"/>
        <dbReference type="EC" id="2.7.11.1"/>
    </reaction>
</comment>
<comment type="catalytic activity">
    <reaction evidence="9">
        <text>L-threonyl-[protein] + ATP = O-phospho-L-threonyl-[protein] + ADP + H(+)</text>
        <dbReference type="Rhea" id="RHEA:46608"/>
        <dbReference type="Rhea" id="RHEA-COMP:11060"/>
        <dbReference type="Rhea" id="RHEA-COMP:11605"/>
        <dbReference type="ChEBI" id="CHEBI:15378"/>
        <dbReference type="ChEBI" id="CHEBI:30013"/>
        <dbReference type="ChEBI" id="CHEBI:30616"/>
        <dbReference type="ChEBI" id="CHEBI:61977"/>
        <dbReference type="ChEBI" id="CHEBI:456216"/>
        <dbReference type="EC" id="2.7.11.1"/>
    </reaction>
</comment>
<comment type="interaction">
    <interactant intactId="EBI-20652836">
        <id>Q9FYK0</id>
    </interactant>
    <interactant intactId="EBI-20651261">
        <id>Q9SHI2</id>
        <label>At1g17230</label>
    </interactant>
    <organismsDiffer>false</organismsDiffer>
    <experiments>4</experiments>
</comment>
<comment type="interaction">
    <interactant intactId="EBI-20652836">
        <id>Q9FYK0</id>
    </interactant>
    <interactant intactId="EBI-20653376">
        <id>Q9FZB8-2</id>
        <label>At1g51810</label>
    </interactant>
    <organismsDiffer>false</organismsDiffer>
    <experiments>2</experiments>
</comment>
<comment type="interaction">
    <interactant intactId="EBI-20652836">
        <id>Q9FYK0</id>
    </interactant>
    <interactant intactId="EBI-20651541">
        <id>C0LGJ9</id>
        <label>At2g02780</label>
    </interactant>
    <organismsDiffer>false</organismsDiffer>
    <experiments>2</experiments>
</comment>
<comment type="interaction">
    <interactant intactId="EBI-20652836">
        <id>Q9FYK0</id>
    </interactant>
    <interactant intactId="EBI-20653342">
        <id>A0A178UFM8</id>
        <label>At5g51560</label>
    </interactant>
    <organismsDiffer>false</organismsDiffer>
    <experiments>3</experiments>
</comment>
<comment type="interaction">
    <interactant intactId="EBI-20652836">
        <id>Q9FYK0</id>
    </interactant>
    <interactant intactId="EBI-20653325">
        <id>O65440-2</id>
        <label>BAM3</label>
    </interactant>
    <organismsDiffer>false</organismsDiffer>
    <experiments>3</experiments>
</comment>
<comment type="interaction">
    <interactant intactId="EBI-20652836">
        <id>Q9FYK0</id>
    </interactant>
    <interactant intactId="EBI-1544507">
        <id>Q9LP77</id>
        <label>RKL1</label>
    </interactant>
    <organismsDiffer>false</organismsDiffer>
    <experiments>3</experiments>
</comment>
<comment type="subcellular location">
    <subcellularLocation>
        <location evidence="2">Membrane</location>
        <topology evidence="2">Single-pass membrane protein</topology>
    </subcellularLocation>
</comment>
<comment type="tissue specificity">
    <text evidence="5">Expressed in siliques and flowers.</text>
</comment>
<comment type="domain">
    <text evidence="1">The leucine-rich repeat (LRR) domain is disrupted by a non-LRR region, resulting in the formation of two LRR solenoid structures shaped like the Arabic number '7'. This is strikingly different from the horseshoe structures of the canonical LRR proteins.</text>
</comment>
<comment type="disruption phenotype">
    <text evidence="5 6">No visible phenotype (PubMed:23613767). Tmk1 and tmk2 double mutants, tmk2 and tmk3 double mutants, tmk1, tmk2 and tmk3 triple mutants and tmk2, tmk3 and tmk4 triple mutants have no visible phenotypes (PubMed:23613767). Tmk1, tmk2 and tmk4 triple mutants have a severe reduction in organ size, a substantial delay in growth and development, and a decrease in fertility (PubMed:23613767). Tmk1, tmk2, tmk3 and tmk4 quadruple mutants are embryo lethal (PubMed:23613767, PubMed:24578577).</text>
</comment>
<comment type="similarity">
    <text evidence="9">Belongs to the protein kinase superfamily. Ser/Thr protein kinase family.</text>
</comment>
<comment type="sequence caution" evidence="9">
    <conflict type="erroneous gene model prediction">
        <sequence resource="EMBL-CDS" id="AAG03120"/>
    </conflict>
</comment>
<proteinExistence type="evidence at protein level"/>
<gene>
    <name evidence="7" type="primary">TMK2</name>
    <name evidence="8" type="synonym">BLK3</name>
    <name evidence="10" type="ordered locus">At1g24650</name>
    <name evidence="11" type="ORF">F21J9.31</name>
    <name evidence="12" type="ORF">F5A9.23</name>
</gene>
<dbReference type="EC" id="2.7.11.1" evidence="9"/>
<dbReference type="EMBL" id="FJ708636">
    <property type="protein sequence ID" value="ACN59232.1"/>
    <property type="molecule type" value="mRNA"/>
</dbReference>
<dbReference type="EMBL" id="AC000103">
    <property type="protein sequence ID" value="AAF97970.1"/>
    <property type="molecule type" value="Genomic_DNA"/>
</dbReference>
<dbReference type="EMBL" id="AC004133">
    <property type="protein sequence ID" value="AAG03120.1"/>
    <property type="status" value="ALT_SEQ"/>
    <property type="molecule type" value="Genomic_DNA"/>
</dbReference>
<dbReference type="EMBL" id="CP002684">
    <property type="protein sequence ID" value="AEE30556.1"/>
    <property type="molecule type" value="Genomic_DNA"/>
</dbReference>
<dbReference type="RefSeq" id="NP_173869.1">
    <property type="nucleotide sequence ID" value="NM_102307.1"/>
</dbReference>
<dbReference type="SMR" id="Q9FYK0"/>
<dbReference type="IntAct" id="Q9FYK0">
    <property type="interactions" value="35"/>
</dbReference>
<dbReference type="STRING" id="3702.Q9FYK0"/>
<dbReference type="GlyCosmos" id="Q9FYK0">
    <property type="glycosylation" value="11 sites, No reported glycans"/>
</dbReference>
<dbReference type="GlyGen" id="Q9FYK0">
    <property type="glycosylation" value="11 sites"/>
</dbReference>
<dbReference type="PaxDb" id="3702-AT1G24650.1"/>
<dbReference type="EnsemblPlants" id="AT1G24650.1">
    <property type="protein sequence ID" value="AT1G24650.1"/>
    <property type="gene ID" value="AT1G24650"/>
</dbReference>
<dbReference type="GeneID" id="839079"/>
<dbReference type="Gramene" id="AT1G24650.1">
    <property type="protein sequence ID" value="AT1G24650.1"/>
    <property type="gene ID" value="AT1G24650"/>
</dbReference>
<dbReference type="KEGG" id="ath:AT1G24650"/>
<dbReference type="Araport" id="AT1G24650"/>
<dbReference type="TAIR" id="AT1G24650"/>
<dbReference type="eggNOG" id="ENOG502QPQ4">
    <property type="taxonomic scope" value="Eukaryota"/>
</dbReference>
<dbReference type="HOGENOM" id="CLU_000288_114_6_1"/>
<dbReference type="InParanoid" id="Q9FYK0"/>
<dbReference type="OMA" id="ATWFRRM"/>
<dbReference type="PhylomeDB" id="Q9FYK0"/>
<dbReference type="PRO" id="PR:Q9FYK0"/>
<dbReference type="Proteomes" id="UP000006548">
    <property type="component" value="Chromosome 1"/>
</dbReference>
<dbReference type="ExpressionAtlas" id="Q9FYK0">
    <property type="expression patterns" value="baseline and differential"/>
</dbReference>
<dbReference type="GO" id="GO:0016020">
    <property type="term" value="C:membrane"/>
    <property type="evidence" value="ECO:0007669"/>
    <property type="project" value="UniProtKB-SubCell"/>
</dbReference>
<dbReference type="GO" id="GO:0005524">
    <property type="term" value="F:ATP binding"/>
    <property type="evidence" value="ECO:0007669"/>
    <property type="project" value="UniProtKB-KW"/>
</dbReference>
<dbReference type="GO" id="GO:0106310">
    <property type="term" value="F:protein serine kinase activity"/>
    <property type="evidence" value="ECO:0007669"/>
    <property type="project" value="RHEA"/>
</dbReference>
<dbReference type="GO" id="GO:0004674">
    <property type="term" value="F:protein serine/threonine kinase activity"/>
    <property type="evidence" value="ECO:0007669"/>
    <property type="project" value="UniProtKB-KW"/>
</dbReference>
<dbReference type="CDD" id="cd14066">
    <property type="entry name" value="STKc_IRAK"/>
    <property type="match status" value="1"/>
</dbReference>
<dbReference type="FunFam" id="3.80.10.10:FF:000129">
    <property type="entry name" value="Leucine-rich repeat receptor-like kinase"/>
    <property type="match status" value="1"/>
</dbReference>
<dbReference type="FunFam" id="1.10.510.10:FF:000198">
    <property type="entry name" value="receptor protein kinase TMK1"/>
    <property type="match status" value="1"/>
</dbReference>
<dbReference type="FunFam" id="3.30.200.20:FF:000226">
    <property type="entry name" value="receptor protein kinase TMK1"/>
    <property type="match status" value="1"/>
</dbReference>
<dbReference type="FunFam" id="3.80.10.10:FF:000190">
    <property type="entry name" value="Receptor-like kinase TMK4"/>
    <property type="match status" value="1"/>
</dbReference>
<dbReference type="Gene3D" id="3.30.200.20">
    <property type="entry name" value="Phosphorylase Kinase, domain 1"/>
    <property type="match status" value="1"/>
</dbReference>
<dbReference type="Gene3D" id="3.80.10.10">
    <property type="entry name" value="Ribonuclease Inhibitor"/>
    <property type="match status" value="2"/>
</dbReference>
<dbReference type="Gene3D" id="1.10.510.10">
    <property type="entry name" value="Transferase(Phosphotransferase) domain 1"/>
    <property type="match status" value="1"/>
</dbReference>
<dbReference type="InterPro" id="IPR052422">
    <property type="entry name" value="Auxin_Ser/Thr_Kinase"/>
</dbReference>
<dbReference type="InterPro" id="IPR011009">
    <property type="entry name" value="Kinase-like_dom_sf"/>
</dbReference>
<dbReference type="InterPro" id="IPR001611">
    <property type="entry name" value="Leu-rich_rpt"/>
</dbReference>
<dbReference type="InterPro" id="IPR003591">
    <property type="entry name" value="Leu-rich_rpt_typical-subtyp"/>
</dbReference>
<dbReference type="InterPro" id="IPR032675">
    <property type="entry name" value="LRR_dom_sf"/>
</dbReference>
<dbReference type="InterPro" id="IPR013210">
    <property type="entry name" value="LRR_N_plant-typ"/>
</dbReference>
<dbReference type="InterPro" id="IPR000719">
    <property type="entry name" value="Prot_kinase_dom"/>
</dbReference>
<dbReference type="InterPro" id="IPR017441">
    <property type="entry name" value="Protein_kinase_ATP_BS"/>
</dbReference>
<dbReference type="InterPro" id="IPR008271">
    <property type="entry name" value="Ser/Thr_kinase_AS"/>
</dbReference>
<dbReference type="PANTHER" id="PTHR47986">
    <property type="entry name" value="OSJNBA0070M12.3 PROTEIN"/>
    <property type="match status" value="1"/>
</dbReference>
<dbReference type="PANTHER" id="PTHR47986:SF34">
    <property type="entry name" value="RECEPTOR-LIKE KINASE TMK2"/>
    <property type="match status" value="1"/>
</dbReference>
<dbReference type="Pfam" id="PF13855">
    <property type="entry name" value="LRR_8"/>
    <property type="match status" value="1"/>
</dbReference>
<dbReference type="Pfam" id="PF08263">
    <property type="entry name" value="LRRNT_2"/>
    <property type="match status" value="2"/>
</dbReference>
<dbReference type="Pfam" id="PF00069">
    <property type="entry name" value="Pkinase"/>
    <property type="match status" value="1"/>
</dbReference>
<dbReference type="SMART" id="SM00369">
    <property type="entry name" value="LRR_TYP"/>
    <property type="match status" value="4"/>
</dbReference>
<dbReference type="SMART" id="SM00220">
    <property type="entry name" value="S_TKc"/>
    <property type="match status" value="1"/>
</dbReference>
<dbReference type="SUPFAM" id="SSF52058">
    <property type="entry name" value="L domain-like"/>
    <property type="match status" value="1"/>
</dbReference>
<dbReference type="SUPFAM" id="SSF56112">
    <property type="entry name" value="Protein kinase-like (PK-like)"/>
    <property type="match status" value="1"/>
</dbReference>
<dbReference type="PROSITE" id="PS00107">
    <property type="entry name" value="PROTEIN_KINASE_ATP"/>
    <property type="match status" value="1"/>
</dbReference>
<dbReference type="PROSITE" id="PS50011">
    <property type="entry name" value="PROTEIN_KINASE_DOM"/>
    <property type="match status" value="1"/>
</dbReference>
<dbReference type="PROSITE" id="PS00108">
    <property type="entry name" value="PROTEIN_KINASE_ST"/>
    <property type="match status" value="1"/>
</dbReference>
<keyword id="KW-0067">ATP-binding</keyword>
<keyword id="KW-1015">Disulfide bond</keyword>
<keyword id="KW-0325">Glycoprotein</keyword>
<keyword id="KW-0418">Kinase</keyword>
<keyword id="KW-0433">Leucine-rich repeat</keyword>
<keyword id="KW-0472">Membrane</keyword>
<keyword id="KW-0547">Nucleotide-binding</keyword>
<keyword id="KW-0675">Receptor</keyword>
<keyword id="KW-1185">Reference proteome</keyword>
<keyword id="KW-0677">Repeat</keyword>
<keyword id="KW-0723">Serine/threonine-protein kinase</keyword>
<keyword id="KW-0732">Signal</keyword>
<keyword id="KW-0808">Transferase</keyword>
<keyword id="KW-0812">Transmembrane</keyword>
<keyword id="KW-1133">Transmembrane helix</keyword>